<dbReference type="EMBL" id="AF164114">
    <property type="protein sequence ID" value="AAF07896.1"/>
    <property type="molecule type" value="Genomic_DNA"/>
</dbReference>
<dbReference type="SMR" id="Q9PUQ8"/>
<dbReference type="STRING" id="31033.ENSTRUP00000051217"/>
<dbReference type="GlyCosmos" id="Q9PUQ8">
    <property type="glycosylation" value="1 site, No reported glycans"/>
</dbReference>
<dbReference type="InParanoid" id="Q9PUQ8"/>
<dbReference type="Proteomes" id="UP000005226">
    <property type="component" value="Unplaced"/>
</dbReference>
<dbReference type="GO" id="GO:0005886">
    <property type="term" value="C:plasma membrane"/>
    <property type="evidence" value="ECO:0007669"/>
    <property type="project" value="UniProtKB-SubCell"/>
</dbReference>
<dbReference type="GO" id="GO:0038036">
    <property type="term" value="F:sphingosine-1-phosphate receptor activity"/>
    <property type="evidence" value="ECO:0007669"/>
    <property type="project" value="InterPro"/>
</dbReference>
<dbReference type="CDD" id="cd15345">
    <property type="entry name" value="7tmA_S1PR3_Edg3"/>
    <property type="match status" value="1"/>
</dbReference>
<dbReference type="FunFam" id="1.20.1070.10:FF:000098">
    <property type="entry name" value="Sphingosine 1-phosphate receptor 1"/>
    <property type="match status" value="1"/>
</dbReference>
<dbReference type="Gene3D" id="1.20.1070.10">
    <property type="entry name" value="Rhodopsin 7-helix transmembrane proteins"/>
    <property type="match status" value="1"/>
</dbReference>
<dbReference type="InterPro" id="IPR004062">
    <property type="entry name" value="EDG3_rcpt"/>
</dbReference>
<dbReference type="InterPro" id="IPR000276">
    <property type="entry name" value="GPCR_Rhodpsn"/>
</dbReference>
<dbReference type="InterPro" id="IPR017452">
    <property type="entry name" value="GPCR_Rhodpsn_7TM"/>
</dbReference>
<dbReference type="InterPro" id="IPR004061">
    <property type="entry name" value="S1P_rcpt"/>
</dbReference>
<dbReference type="PANTHER" id="PTHR22750">
    <property type="entry name" value="G-PROTEIN COUPLED RECEPTOR"/>
    <property type="match status" value="1"/>
</dbReference>
<dbReference type="Pfam" id="PF00001">
    <property type="entry name" value="7tm_1"/>
    <property type="match status" value="1"/>
</dbReference>
<dbReference type="PRINTS" id="PR01524">
    <property type="entry name" value="EDG3RECEPTOR"/>
</dbReference>
<dbReference type="PRINTS" id="PR00237">
    <property type="entry name" value="GPCRRHODOPSN"/>
</dbReference>
<dbReference type="PRINTS" id="PR01523">
    <property type="entry name" value="S1PRECEPTOR"/>
</dbReference>
<dbReference type="SMART" id="SM01381">
    <property type="entry name" value="7TM_GPCR_Srsx"/>
    <property type="match status" value="1"/>
</dbReference>
<dbReference type="SUPFAM" id="SSF81321">
    <property type="entry name" value="Family A G protein-coupled receptor-like"/>
    <property type="match status" value="1"/>
</dbReference>
<dbReference type="PROSITE" id="PS00237">
    <property type="entry name" value="G_PROTEIN_RECEP_F1_1"/>
    <property type="match status" value="1"/>
</dbReference>
<dbReference type="PROSITE" id="PS50262">
    <property type="entry name" value="G_PROTEIN_RECEP_F1_2"/>
    <property type="match status" value="1"/>
</dbReference>
<feature type="chain" id="PRO_0000069423" description="Sphingosine 1-phosphate receptor 3">
    <location>
        <begin position="1"/>
        <end position="384"/>
    </location>
</feature>
<feature type="topological domain" description="Extracellular" evidence="1">
    <location>
        <begin position="1"/>
        <end position="34"/>
    </location>
</feature>
<feature type="transmembrane region" description="Helical; Name=1" evidence="1">
    <location>
        <begin position="35"/>
        <end position="55"/>
    </location>
</feature>
<feature type="topological domain" description="Cytoplasmic" evidence="1">
    <location>
        <begin position="56"/>
        <end position="64"/>
    </location>
</feature>
<feature type="transmembrane region" description="Helical; Name=2" evidence="1">
    <location>
        <begin position="65"/>
        <end position="85"/>
    </location>
</feature>
<feature type="topological domain" description="Extracellular" evidence="1">
    <location>
        <begin position="86"/>
        <end position="105"/>
    </location>
</feature>
<feature type="transmembrane region" description="Helical; Name=3" evidence="1">
    <location>
        <begin position="106"/>
        <end position="126"/>
    </location>
</feature>
<feature type="topological domain" description="Cytoplasmic" evidence="1">
    <location>
        <begin position="127"/>
        <end position="144"/>
    </location>
</feature>
<feature type="transmembrane region" description="Helical; Name=4" evidence="1">
    <location>
        <begin position="145"/>
        <end position="165"/>
    </location>
</feature>
<feature type="topological domain" description="Extracellular" evidence="1">
    <location>
        <begin position="166"/>
        <end position="186"/>
    </location>
</feature>
<feature type="transmembrane region" description="Helical; Name=5" evidence="1">
    <location>
        <begin position="187"/>
        <end position="207"/>
    </location>
</feature>
<feature type="topological domain" description="Cytoplasmic" evidence="1">
    <location>
        <begin position="208"/>
        <end position="235"/>
    </location>
</feature>
<feature type="transmembrane region" description="Helical; Name=6" evidence="1">
    <location>
        <begin position="236"/>
        <end position="256"/>
    </location>
</feature>
<feature type="topological domain" description="Extracellular" evidence="1">
    <location>
        <begin position="257"/>
        <end position="271"/>
    </location>
</feature>
<feature type="transmembrane region" description="Helical; Name=7" evidence="1">
    <location>
        <begin position="272"/>
        <end position="292"/>
    </location>
</feature>
<feature type="topological domain" description="Cytoplasmic" evidence="1">
    <location>
        <begin position="293"/>
        <end position="384"/>
    </location>
</feature>
<feature type="region of interest" description="Disordered" evidence="4">
    <location>
        <begin position="315"/>
        <end position="384"/>
    </location>
</feature>
<feature type="compositionally biased region" description="Polar residues" evidence="4">
    <location>
        <begin position="315"/>
        <end position="325"/>
    </location>
</feature>
<feature type="compositionally biased region" description="Polar residues" evidence="4">
    <location>
        <begin position="336"/>
        <end position="347"/>
    </location>
</feature>
<feature type="compositionally biased region" description="Basic and acidic residues" evidence="4">
    <location>
        <begin position="349"/>
        <end position="359"/>
    </location>
</feature>
<feature type="glycosylation site" description="N-linked (GlcNAc...) asparagine" evidence="2">
    <location>
        <position position="12"/>
    </location>
</feature>
<comment type="function">
    <text evidence="1">Receptor for the lysosphingolipid sphingosine 1-phosphate (S1P).</text>
</comment>
<comment type="subcellular location">
    <subcellularLocation>
        <location>Cell membrane</location>
        <topology>Multi-pass membrane protein</topology>
    </subcellularLocation>
</comment>
<comment type="similarity">
    <text evidence="3">Belongs to the G-protein coupled receptor 1 family.</text>
</comment>
<gene>
    <name type="primary">s1pr3</name>
    <name type="synonym">edg3</name>
</gene>
<sequence>MMINPLIYLHYNYTGKLDHRPTVGTSPGTRDPKTIAFLVVCSFIILENLTVLLAIWKNHRFHNRMYFFIGNLALCDLLASVAYLVNLLLSGEKTLQLSPVLWFVREGSMFVTLGASIFSLLAIAIERHLTMIKMRPYDASKNYRVFLLIGTCWLVAVLLGALPILGWNCLGNLPDCSTILPLYTKKYVAFCIIVFIVLLLAMSVLYARIYILVKSSSQKVSKHRNSEHAMSLLRTVIIVVGVFIACWMPIFVLLLLDVACERPCPILYKADWFIAVAVLNSAMNPIIYTLASREMRRAFLGLVCGVCYRGNGSGNDSGNKQFQEPSRSRSKSWSSQTHPNQSQQSSRPAELDREQETGHGEISVVAGGAAQASQREGEGGNGGR</sequence>
<organism>
    <name type="scientific">Takifugu rubripes</name>
    <name type="common">Japanese pufferfish</name>
    <name type="synonym">Fugu rubripes</name>
    <dbReference type="NCBI Taxonomy" id="31033"/>
    <lineage>
        <taxon>Eukaryota</taxon>
        <taxon>Metazoa</taxon>
        <taxon>Chordata</taxon>
        <taxon>Craniata</taxon>
        <taxon>Vertebrata</taxon>
        <taxon>Euteleostomi</taxon>
        <taxon>Actinopterygii</taxon>
        <taxon>Neopterygii</taxon>
        <taxon>Teleostei</taxon>
        <taxon>Neoteleostei</taxon>
        <taxon>Acanthomorphata</taxon>
        <taxon>Eupercaria</taxon>
        <taxon>Tetraodontiformes</taxon>
        <taxon>Tetradontoidea</taxon>
        <taxon>Tetraodontidae</taxon>
        <taxon>Takifugu</taxon>
    </lineage>
</organism>
<proteinExistence type="inferred from homology"/>
<protein>
    <recommendedName>
        <fullName>Sphingosine 1-phosphate receptor 3</fullName>
        <shortName>S1P receptor 3</shortName>
        <shortName>S1P3</shortName>
    </recommendedName>
    <alternativeName>
        <fullName>Sphingosine 1-phosphate receptor Edg-3</fullName>
        <shortName>S1P receptor Edg-3</shortName>
    </alternativeName>
</protein>
<reference key="1">
    <citation type="journal article" date="1999" name="FEBS Lett.">
        <title>Molecular cloning of EDG-3 and N-Shc genes from the puffer fish, Fugu rubripes, and conservation of synteny with the human genome.</title>
        <authorList>
            <person name="Yamaguchi F."/>
            <person name="Yamaguchi K."/>
            <person name="Tokuda M."/>
            <person name="Brenner S."/>
        </authorList>
    </citation>
    <scope>NUCLEOTIDE SEQUENCE [GENOMIC DNA]</scope>
</reference>
<evidence type="ECO:0000250" key="1"/>
<evidence type="ECO:0000255" key="2"/>
<evidence type="ECO:0000255" key="3">
    <source>
        <dbReference type="PROSITE-ProRule" id="PRU00521"/>
    </source>
</evidence>
<evidence type="ECO:0000256" key="4">
    <source>
        <dbReference type="SAM" id="MobiDB-lite"/>
    </source>
</evidence>
<accession>Q9PUQ8</accession>
<name>S1PR3_TAKRU</name>
<keyword id="KW-1003">Cell membrane</keyword>
<keyword id="KW-0297">G-protein coupled receptor</keyword>
<keyword id="KW-0325">Glycoprotein</keyword>
<keyword id="KW-0472">Membrane</keyword>
<keyword id="KW-0675">Receptor</keyword>
<keyword id="KW-1185">Reference proteome</keyword>
<keyword id="KW-0807">Transducer</keyword>
<keyword id="KW-0812">Transmembrane</keyword>
<keyword id="KW-1133">Transmembrane helix</keyword>